<organism>
    <name type="scientific">Mus musculus</name>
    <name type="common">Mouse</name>
    <dbReference type="NCBI Taxonomy" id="10090"/>
    <lineage>
        <taxon>Eukaryota</taxon>
        <taxon>Metazoa</taxon>
        <taxon>Chordata</taxon>
        <taxon>Craniata</taxon>
        <taxon>Vertebrata</taxon>
        <taxon>Euteleostomi</taxon>
        <taxon>Mammalia</taxon>
        <taxon>Eutheria</taxon>
        <taxon>Euarchontoglires</taxon>
        <taxon>Glires</taxon>
        <taxon>Rodentia</taxon>
        <taxon>Myomorpha</taxon>
        <taxon>Muroidea</taxon>
        <taxon>Muridae</taxon>
        <taxon>Murinae</taxon>
        <taxon>Mus</taxon>
        <taxon>Mus</taxon>
    </lineage>
</organism>
<sequence length="150" mass="16630">MKALYMVFVLWVLIGCFLSGECHRAPRGQHGPRRTLAPSTHHRHYHLYPLPDPNHVQFGVPPFLPTSSGFCKPHSLSLYAPPFEIVIQPSSIIVTIPGLILTLSSDPSPQRNCPARTPPRVKANIIPGPITAQLLPKLKIPLIILDDSRK</sequence>
<comment type="function">
    <text>May play a role in protection or detoxification.</text>
</comment>
<comment type="subcellular location">
    <subcellularLocation>
        <location evidence="2">Secreted</location>
    </subcellularLocation>
</comment>
<comment type="alternative products">
    <event type="alternative splicing"/>
    <isoform>
        <id>O09133-1</id>
        <name>Alpha</name>
        <sequence type="displayed"/>
    </isoform>
    <isoform>
        <id>O35982-1</id>
        <name>Beta</name>
        <sequence type="external"/>
    </isoform>
    <isoform>
        <id>O35985-1</id>
        <name>Gamma</name>
        <sequence type="external"/>
    </isoform>
    <isoform>
        <id>O35979-1</id>
        <name>Delta</name>
        <sequence type="external"/>
    </isoform>
    <isoform>
        <id>O35961-1</id>
        <name>Epsilon</name>
        <sequence type="external"/>
    </isoform>
</comment>
<name>SMR2A_MOUSE</name>
<gene>
    <name type="primary">Smr2</name>
    <name type="synonym">Msg2</name>
    <name type="synonym">Vcs2</name>
</gene>
<evidence type="ECO:0000255" key="1"/>
<evidence type="ECO:0000305" key="2"/>
<feature type="signal peptide" evidence="1">
    <location>
        <begin position="1"/>
        <end position="22"/>
    </location>
</feature>
<feature type="chain" id="PRO_0000022374" description="Submaxillary gland androgen-regulated protein 2, isoform alpha">
    <location>
        <begin position="23"/>
        <end position="150"/>
    </location>
</feature>
<dbReference type="EMBL" id="U82380">
    <property type="protein sequence ID" value="AAB93420.1"/>
    <property type="molecule type" value="mRNA"/>
</dbReference>
<dbReference type="EMBL" id="U82375">
    <property type="protein sequence ID" value="AAB93510.1"/>
    <property type="molecule type" value="Genomic_DNA"/>
</dbReference>
<dbReference type="PIR" id="I48670">
    <property type="entry name" value="I48670"/>
</dbReference>
<dbReference type="RefSeq" id="XP_030110128.1">
    <molecule id="O09133-1"/>
    <property type="nucleotide sequence ID" value="XM_030254268.1"/>
</dbReference>
<dbReference type="SMR" id="O09133"/>
<dbReference type="FunCoup" id="O09133">
    <property type="interactions" value="13"/>
</dbReference>
<dbReference type="SwissPalm" id="O09133"/>
<dbReference type="ProteomicsDB" id="261527">
    <molecule id="O09133-1"/>
</dbReference>
<dbReference type="Ensembl" id="ENSMUST00000199635.5">
    <molecule id="O09133-1"/>
    <property type="protein sequence ID" value="ENSMUSP00000142444.2"/>
    <property type="gene ID" value="ENSMUSG00000029281.14"/>
</dbReference>
<dbReference type="GeneID" id="20600"/>
<dbReference type="AGR" id="MGI:102762"/>
<dbReference type="MGI" id="MGI:102762">
    <property type="gene designation" value="Smr2"/>
</dbReference>
<dbReference type="VEuPathDB" id="HostDB:ENSMUSG00000029281"/>
<dbReference type="GeneTree" id="ENSGT00940000164646"/>
<dbReference type="HOGENOM" id="CLU_150752_0_0_1"/>
<dbReference type="InParanoid" id="O09133"/>
<dbReference type="OrthoDB" id="9635060at2759"/>
<dbReference type="PhylomeDB" id="O09133"/>
<dbReference type="ChiTaRS" id="Smr2">
    <property type="organism name" value="mouse"/>
</dbReference>
<dbReference type="Proteomes" id="UP000000589">
    <property type="component" value="Chromosome 5"/>
</dbReference>
<dbReference type="RNAct" id="O09133">
    <property type="molecule type" value="protein"/>
</dbReference>
<dbReference type="Bgee" id="ENSMUSG00000029281">
    <property type="expression patterns" value="Expressed in triceps brachii and 131 other cell types or tissues"/>
</dbReference>
<dbReference type="ExpressionAtlas" id="O09133">
    <property type="expression patterns" value="differential"/>
</dbReference>
<dbReference type="GO" id="GO:0005576">
    <property type="term" value="C:extracellular region"/>
    <property type="evidence" value="ECO:0007669"/>
    <property type="project" value="UniProtKB-SubCell"/>
</dbReference>
<dbReference type="GO" id="GO:0009636">
    <property type="term" value="P:response to toxic substance"/>
    <property type="evidence" value="ECO:0007669"/>
    <property type="project" value="UniProtKB-KW"/>
</dbReference>
<dbReference type="InterPro" id="IPR026288">
    <property type="entry name" value="SMR-like"/>
</dbReference>
<dbReference type="PANTHER" id="PTHR14179">
    <property type="entry name" value="SMR1-RELATED"/>
    <property type="match status" value="1"/>
</dbReference>
<dbReference type="PANTHER" id="PTHR14179:SF14">
    <property type="entry name" value="SUBMAXILLARY GLAND ANDROGEN REGULATED PROTEIN 2 LIKE-RELATED"/>
    <property type="match status" value="1"/>
</dbReference>
<dbReference type="Pfam" id="PF15621">
    <property type="entry name" value="PROL5-SMR"/>
    <property type="match status" value="1"/>
</dbReference>
<protein>
    <recommendedName>
        <fullName>Submaxillary gland androgen-regulated protein 2, isoform alpha</fullName>
    </recommendedName>
    <alternativeName>
        <fullName>Salivary protein MSG2, isoform alpha</fullName>
    </alternativeName>
</protein>
<accession>O09133</accession>
<reference key="1">
    <citation type="journal article" date="1994" name="Gene">
        <title>Three novel SMR1-related cDNAs characterized in the submaxillary gland of mice show extensive evolutionary divergence in the protein coding region.</title>
        <authorList>
            <person name="Tronik-Le Roux D."/>
            <person name="Senorale-Pose M."/>
            <person name="Rougeon F."/>
        </authorList>
    </citation>
    <scope>NUCLEOTIDE SEQUENCE [MRNA] (ISOFORM ALPHA)</scope>
    <source>
        <strain>BALB/cJ</strain>
        <tissue>Submandibular gland</tissue>
    </source>
</reference>
<reference key="2">
    <citation type="journal article" date="1997" name="Gene">
        <title>The mouse Vcs2 gene is a composite structure which evolved by gene fusion and encodes five distinct salivary mRNA species.</title>
        <authorList>
            <person name="Senorale-Pose M."/>
            <person name="Rougeon F."/>
        </authorList>
    </citation>
    <scope>NUCLEOTIDE SEQUENCE [GENOMIC DNA / MRNA] (ISOFORMS ALPHA; BETA; GAMMA; DELTA AND EPSILON)</scope>
    <source>
        <strain>BALB/cJ</strain>
        <tissue>Submandibular gland</tissue>
    </source>
</reference>
<keyword id="KW-0025">Alternative splicing</keyword>
<keyword id="KW-0216">Detoxification</keyword>
<keyword id="KW-1185">Reference proteome</keyword>
<keyword id="KW-0964">Secreted</keyword>
<keyword id="KW-0732">Signal</keyword>
<proteinExistence type="evidence at transcript level"/>